<comment type="function">
    <text evidence="1">This protein is involved in the repair of mismatches in DNA. It is possible that it carries out the mismatch recognition step. This protein has a weak ATPase activity.</text>
</comment>
<comment type="similarity">
    <text evidence="1">Belongs to the DNA mismatch repair MutS family.</text>
</comment>
<name>MUTS_GEOSW</name>
<keyword id="KW-0067">ATP-binding</keyword>
<keyword id="KW-0227">DNA damage</keyword>
<keyword id="KW-0234">DNA repair</keyword>
<keyword id="KW-0238">DNA-binding</keyword>
<keyword id="KW-0547">Nucleotide-binding</keyword>
<proteinExistence type="inferred from homology"/>
<accession>C5D9H5</accession>
<sequence>MATYTPMIQQYLDIKAQYPDAFLFFRLGDFYEMFFDDAIKAAQELEITLTSRDGGGEERVPMCGVPYHSAQGYIEQLISKGYKVAICEQVEDPKTAKGVVRREVVQLITPGTVMEGKGLLDKENNYLATVTMFDDGTYGFAYTDLSTGENRITLLASLDDVMNELYAIGTKEIVISSQFPEQYQQLLKERYDVTISYEDETVIPEGFTSIVEALQQDKLKITFGRLLHYIIRTQKRRLDHMQSVQVYQVDHYMKIDLYSKRNLELTETIRSKGRKGSLLWLLDETVTAMGGRLLKQWLDRPLLDRKQIERRLHMVETLIHHYFERQELRERLREVYDVERLAGRVAYGNVNARDLIQLKKSLQQIPALKDIVEKLPDHEAKQLANKLDPCSELVDLLERSIQENPPLSVKEGNIIKDGYNETLDRYRDASRNGKAWIAQLESKERELTGIKSLKIGYNRVFGYYIEVTKPNLHLLPKGRYERKQTLANAERFITQELKEKEALILEAEEKSIELEYELFVDIRERVKQYIPRLQSLAKTISELDVLQSFATVSEERHYVKPQFSDNRELIIQAGRHPVVEKVLGAQTYVPNDCYMNKERELLLITGPNMSGKSTYMRQIALTVIMAQIGCFVPAEKAVLPIFDQVFTRIGAADDLVSGQSTFMVEMLEARNAIVHATQNSLILFDEIGRGTSTYDGMALAQAIIEYIHDHIGAKTLFSTHYHELTDLEQSLAKLKNVHVRAVEENGKVVFLHKIEEGPADQSYGIHVAELAELPASLIQRAKEILAELEQQEQRKEQPSGKNEAVFEQLSMFAEEQPSKEESHLSKKEKKALEALKSVNLLETTPLEALNKLYEIQKLLK</sequence>
<organism>
    <name type="scientific">Geobacillus sp. (strain WCH70)</name>
    <dbReference type="NCBI Taxonomy" id="471223"/>
    <lineage>
        <taxon>Bacteria</taxon>
        <taxon>Bacillati</taxon>
        <taxon>Bacillota</taxon>
        <taxon>Bacilli</taxon>
        <taxon>Bacillales</taxon>
        <taxon>Anoxybacillaceae</taxon>
        <taxon>Geobacillus</taxon>
    </lineage>
</organism>
<reference key="1">
    <citation type="submission" date="2009-06" db="EMBL/GenBank/DDBJ databases">
        <title>Complete sequence of chromosome of Geopacillus sp. WCH70.</title>
        <authorList>
            <consortium name="US DOE Joint Genome Institute"/>
            <person name="Lucas S."/>
            <person name="Copeland A."/>
            <person name="Lapidus A."/>
            <person name="Glavina del Rio T."/>
            <person name="Dalin E."/>
            <person name="Tice H."/>
            <person name="Bruce D."/>
            <person name="Goodwin L."/>
            <person name="Pitluck S."/>
            <person name="Chertkov O."/>
            <person name="Brettin T."/>
            <person name="Detter J.C."/>
            <person name="Han C."/>
            <person name="Larimer F."/>
            <person name="Land M."/>
            <person name="Hauser L."/>
            <person name="Kyrpides N."/>
            <person name="Mikhailova N."/>
            <person name="Brumm P."/>
            <person name="Mead D.A."/>
            <person name="Richardson P."/>
        </authorList>
    </citation>
    <scope>NUCLEOTIDE SEQUENCE [LARGE SCALE GENOMIC DNA]</scope>
    <source>
        <strain>WCH70</strain>
    </source>
</reference>
<gene>
    <name evidence="1" type="primary">mutS</name>
    <name type="ordered locus">GWCH70_1202</name>
</gene>
<dbReference type="EMBL" id="CP001638">
    <property type="protein sequence ID" value="ACS24061.1"/>
    <property type="molecule type" value="Genomic_DNA"/>
</dbReference>
<dbReference type="SMR" id="C5D9H5"/>
<dbReference type="STRING" id="471223.GWCH70_1202"/>
<dbReference type="KEGG" id="gwc:GWCH70_1202"/>
<dbReference type="eggNOG" id="COG0249">
    <property type="taxonomic scope" value="Bacteria"/>
</dbReference>
<dbReference type="HOGENOM" id="CLU_002472_1_3_9"/>
<dbReference type="OrthoDB" id="9802448at2"/>
<dbReference type="GO" id="GO:0005829">
    <property type="term" value="C:cytosol"/>
    <property type="evidence" value="ECO:0007669"/>
    <property type="project" value="TreeGrafter"/>
</dbReference>
<dbReference type="GO" id="GO:0005524">
    <property type="term" value="F:ATP binding"/>
    <property type="evidence" value="ECO:0007669"/>
    <property type="project" value="UniProtKB-UniRule"/>
</dbReference>
<dbReference type="GO" id="GO:0140664">
    <property type="term" value="F:ATP-dependent DNA damage sensor activity"/>
    <property type="evidence" value="ECO:0007669"/>
    <property type="project" value="InterPro"/>
</dbReference>
<dbReference type="GO" id="GO:0003684">
    <property type="term" value="F:damaged DNA binding"/>
    <property type="evidence" value="ECO:0007669"/>
    <property type="project" value="UniProtKB-UniRule"/>
</dbReference>
<dbReference type="GO" id="GO:0030983">
    <property type="term" value="F:mismatched DNA binding"/>
    <property type="evidence" value="ECO:0007669"/>
    <property type="project" value="InterPro"/>
</dbReference>
<dbReference type="GO" id="GO:0006298">
    <property type="term" value="P:mismatch repair"/>
    <property type="evidence" value="ECO:0007669"/>
    <property type="project" value="UniProtKB-UniRule"/>
</dbReference>
<dbReference type="CDD" id="cd03284">
    <property type="entry name" value="ABC_MutS1"/>
    <property type="match status" value="1"/>
</dbReference>
<dbReference type="FunFam" id="1.10.1420.10:FF:000007">
    <property type="entry name" value="DNA mismatch repair protein MutS"/>
    <property type="match status" value="1"/>
</dbReference>
<dbReference type="FunFam" id="3.40.1170.10:FF:000001">
    <property type="entry name" value="DNA mismatch repair protein MutS"/>
    <property type="match status" value="1"/>
</dbReference>
<dbReference type="FunFam" id="3.40.50.300:FF:000896">
    <property type="entry name" value="DNA mismatch repair protein MutS"/>
    <property type="match status" value="1"/>
</dbReference>
<dbReference type="Gene3D" id="1.10.1420.10">
    <property type="match status" value="2"/>
</dbReference>
<dbReference type="Gene3D" id="3.40.1170.10">
    <property type="entry name" value="DNA repair protein MutS, domain I"/>
    <property type="match status" value="1"/>
</dbReference>
<dbReference type="Gene3D" id="3.30.420.110">
    <property type="entry name" value="MutS, connector domain"/>
    <property type="match status" value="1"/>
</dbReference>
<dbReference type="Gene3D" id="3.40.50.300">
    <property type="entry name" value="P-loop containing nucleotide triphosphate hydrolases"/>
    <property type="match status" value="1"/>
</dbReference>
<dbReference type="HAMAP" id="MF_00096">
    <property type="entry name" value="MutS"/>
    <property type="match status" value="1"/>
</dbReference>
<dbReference type="InterPro" id="IPR005748">
    <property type="entry name" value="DNA_mismatch_repair_MutS"/>
</dbReference>
<dbReference type="InterPro" id="IPR007695">
    <property type="entry name" value="DNA_mismatch_repair_MutS-lik_N"/>
</dbReference>
<dbReference type="InterPro" id="IPR017261">
    <property type="entry name" value="DNA_mismatch_repair_MutS/MSH"/>
</dbReference>
<dbReference type="InterPro" id="IPR000432">
    <property type="entry name" value="DNA_mismatch_repair_MutS_C"/>
</dbReference>
<dbReference type="InterPro" id="IPR007861">
    <property type="entry name" value="DNA_mismatch_repair_MutS_clamp"/>
</dbReference>
<dbReference type="InterPro" id="IPR007696">
    <property type="entry name" value="DNA_mismatch_repair_MutS_core"/>
</dbReference>
<dbReference type="InterPro" id="IPR016151">
    <property type="entry name" value="DNA_mismatch_repair_MutS_N"/>
</dbReference>
<dbReference type="InterPro" id="IPR036187">
    <property type="entry name" value="DNA_mismatch_repair_MutS_sf"/>
</dbReference>
<dbReference type="InterPro" id="IPR007860">
    <property type="entry name" value="DNA_mmatch_repair_MutS_con_dom"/>
</dbReference>
<dbReference type="InterPro" id="IPR045076">
    <property type="entry name" value="MutS"/>
</dbReference>
<dbReference type="InterPro" id="IPR036678">
    <property type="entry name" value="MutS_con_dom_sf"/>
</dbReference>
<dbReference type="InterPro" id="IPR027417">
    <property type="entry name" value="P-loop_NTPase"/>
</dbReference>
<dbReference type="NCBIfam" id="TIGR01070">
    <property type="entry name" value="mutS1"/>
    <property type="match status" value="1"/>
</dbReference>
<dbReference type="NCBIfam" id="NF003810">
    <property type="entry name" value="PRK05399.1"/>
    <property type="match status" value="1"/>
</dbReference>
<dbReference type="PANTHER" id="PTHR11361:SF34">
    <property type="entry name" value="DNA MISMATCH REPAIR PROTEIN MSH1, MITOCHONDRIAL"/>
    <property type="match status" value="1"/>
</dbReference>
<dbReference type="PANTHER" id="PTHR11361">
    <property type="entry name" value="DNA MISMATCH REPAIR PROTEIN MUTS FAMILY MEMBER"/>
    <property type="match status" value="1"/>
</dbReference>
<dbReference type="Pfam" id="PF01624">
    <property type="entry name" value="MutS_I"/>
    <property type="match status" value="1"/>
</dbReference>
<dbReference type="Pfam" id="PF05188">
    <property type="entry name" value="MutS_II"/>
    <property type="match status" value="1"/>
</dbReference>
<dbReference type="Pfam" id="PF05192">
    <property type="entry name" value="MutS_III"/>
    <property type="match status" value="1"/>
</dbReference>
<dbReference type="Pfam" id="PF05190">
    <property type="entry name" value="MutS_IV"/>
    <property type="match status" value="1"/>
</dbReference>
<dbReference type="Pfam" id="PF00488">
    <property type="entry name" value="MutS_V"/>
    <property type="match status" value="1"/>
</dbReference>
<dbReference type="PIRSF" id="PIRSF037677">
    <property type="entry name" value="DNA_mis_repair_Msh6"/>
    <property type="match status" value="1"/>
</dbReference>
<dbReference type="SMART" id="SM00534">
    <property type="entry name" value="MUTSac"/>
    <property type="match status" value="1"/>
</dbReference>
<dbReference type="SMART" id="SM00533">
    <property type="entry name" value="MUTSd"/>
    <property type="match status" value="1"/>
</dbReference>
<dbReference type="SUPFAM" id="SSF55271">
    <property type="entry name" value="DNA repair protein MutS, domain I"/>
    <property type="match status" value="1"/>
</dbReference>
<dbReference type="SUPFAM" id="SSF53150">
    <property type="entry name" value="DNA repair protein MutS, domain II"/>
    <property type="match status" value="1"/>
</dbReference>
<dbReference type="SUPFAM" id="SSF48334">
    <property type="entry name" value="DNA repair protein MutS, domain III"/>
    <property type="match status" value="1"/>
</dbReference>
<dbReference type="SUPFAM" id="SSF52540">
    <property type="entry name" value="P-loop containing nucleoside triphosphate hydrolases"/>
    <property type="match status" value="1"/>
</dbReference>
<dbReference type="PROSITE" id="PS00486">
    <property type="entry name" value="DNA_MISMATCH_REPAIR_2"/>
    <property type="match status" value="1"/>
</dbReference>
<evidence type="ECO:0000255" key="1">
    <source>
        <dbReference type="HAMAP-Rule" id="MF_00096"/>
    </source>
</evidence>
<protein>
    <recommendedName>
        <fullName evidence="1">DNA mismatch repair protein MutS</fullName>
    </recommendedName>
</protein>
<feature type="chain" id="PRO_1000202738" description="DNA mismatch repair protein MutS">
    <location>
        <begin position="1"/>
        <end position="860"/>
    </location>
</feature>
<feature type="binding site" evidence="1">
    <location>
        <begin position="606"/>
        <end position="613"/>
    </location>
    <ligand>
        <name>ATP</name>
        <dbReference type="ChEBI" id="CHEBI:30616"/>
    </ligand>
</feature>